<name>FIBA_SYNCA</name>
<dbReference type="GO" id="GO:0005576">
    <property type="term" value="C:extracellular region"/>
    <property type="evidence" value="ECO:0007669"/>
    <property type="project" value="UniProtKB-SubCell"/>
</dbReference>
<dbReference type="GO" id="GO:0002250">
    <property type="term" value="P:adaptive immune response"/>
    <property type="evidence" value="ECO:0007669"/>
    <property type="project" value="UniProtKB-KW"/>
</dbReference>
<dbReference type="GO" id="GO:0007596">
    <property type="term" value="P:blood coagulation"/>
    <property type="evidence" value="ECO:0007669"/>
    <property type="project" value="UniProtKB-KW"/>
</dbReference>
<dbReference type="GO" id="GO:0045087">
    <property type="term" value="P:innate immune response"/>
    <property type="evidence" value="ECO:0007669"/>
    <property type="project" value="UniProtKB-KW"/>
</dbReference>
<accession>P14463</accession>
<protein>
    <recommendedName>
        <fullName>Fibrinogen alpha chain</fullName>
    </recommendedName>
    <component>
        <recommendedName>
            <fullName>Fibrinopeptide A</fullName>
        </recommendedName>
    </component>
</protein>
<evidence type="ECO:0000250" key="1">
    <source>
        <dbReference type="UniProtKB" id="E9PV24"/>
    </source>
</evidence>
<evidence type="ECO:0000250" key="2">
    <source>
        <dbReference type="UniProtKB" id="P02671"/>
    </source>
</evidence>
<proteinExistence type="evidence at protein level"/>
<feature type="peptide" id="PRO_0000009041" description="Fibrinopeptide A">
    <location>
        <begin position="1"/>
        <end position="15"/>
    </location>
</feature>
<feature type="non-terminal residue">
    <location>
        <position position="15"/>
    </location>
</feature>
<organism>
    <name type="scientific">Syncerus caffer</name>
    <name type="common">African buffalo</name>
    <dbReference type="NCBI Taxonomy" id="9970"/>
    <lineage>
        <taxon>Eukaryota</taxon>
        <taxon>Metazoa</taxon>
        <taxon>Chordata</taxon>
        <taxon>Craniata</taxon>
        <taxon>Vertebrata</taxon>
        <taxon>Euteleostomi</taxon>
        <taxon>Mammalia</taxon>
        <taxon>Eutheria</taxon>
        <taxon>Laurasiatheria</taxon>
        <taxon>Artiodactyla</taxon>
        <taxon>Ruminantia</taxon>
        <taxon>Pecora</taxon>
        <taxon>Bovidae</taxon>
        <taxon>Bovinae</taxon>
        <taxon>Syncerus</taxon>
    </lineage>
</organism>
<sequence>EDGSGEFLAEGGGVR</sequence>
<comment type="function">
    <text evidence="1">Cleaved by the protease thrombin to yield monomers which, together with fibrinogen beta (FGB) and fibrinogen gamma (FGG), polymerize to form an insoluble fibrin matrix. Fibrin has a major function in hemostasis as one of the primary components of blood clots. In addition, functions during the early stages of wound repair to stabilize the lesion and guide cell migration during re-epithelialization. Was originally thought to be essential for platelet aggregation, based on in vitro studies using anticoagulated blood. However, subsequent studies have shown that it is not absolutely required for thrombus formation in vivo. Enhances expression of SELP in activated platelets via an ITGB3-dependent pathway. Maternal fibrinogen is essential for successful pregnancy. Fibrin deposition is also associated with infection, where it protects against IFNG-mediated hemorrhage. May also facilitate the immune response via both innate and T-cell mediated pathways.</text>
</comment>
<comment type="subunit">
    <text evidence="2">Heterohexamer; disulfide linked. Contains 2 sets of 3 non-identical chains (alpha, beta and gamma). The 2 heterotrimers are in head to head conformation with the N-termini in a small central domain (By similarity).</text>
</comment>
<comment type="subcellular location">
    <subcellularLocation>
        <location>Secreted</location>
    </subcellularLocation>
</comment>
<comment type="domain">
    <text evidence="2">A long coiled coil structure formed by 3 polypeptide chains connects the central nodule to the C-terminal domains (distal nodules). The long C-terminal ends of the alpha chains fold back, contributing a fourth strand to the coiled coil structure.</text>
</comment>
<comment type="PTM">
    <text>Conversion of fibrinogen to fibrin is triggered by thrombin, which cleaves fibrinopeptides A and B from alpha and beta chains, and thus exposes the N-terminal polymerization sites responsible for the formation of the soft clot. The soft clot is converted into the hard clot by factor XIIIA which catalyzes the epsilon-(gamma-glutamyl)lysine cross-linking between gamma chains (stronger) and between alpha chains (weaker) of different monomers.</text>
</comment>
<comment type="PTM">
    <text>Forms F13A-mediated cross-links between a glutamine and the epsilon-amino group of a lysine residue, forming fibronectin-fibrinogen heteropolymers.</text>
</comment>
<gene>
    <name type="primary">FGA</name>
</gene>
<reference key="1">
    <citation type="journal article" date="1967" name="Arch. Biochem. Biophys.">
        <title>Amino acid sequence studies on artiodactyl fibrinopeptides. I. Dromedary camel, mule deer, and cape buffalo.</title>
        <authorList>
            <person name="Doolittle R.F."/>
            <person name="Schubert D."/>
            <person name="Schwartz S.A."/>
        </authorList>
    </citation>
    <scope>PROTEIN SEQUENCE</scope>
</reference>
<keyword id="KW-1064">Adaptive immunity</keyword>
<keyword id="KW-0094">Blood coagulation</keyword>
<keyword id="KW-0175">Coiled coil</keyword>
<keyword id="KW-0903">Direct protein sequencing</keyword>
<keyword id="KW-1015">Disulfide bond</keyword>
<keyword id="KW-0356">Hemostasis</keyword>
<keyword id="KW-0391">Immunity</keyword>
<keyword id="KW-0399">Innate immunity</keyword>
<keyword id="KW-0964">Secreted</keyword>